<accession>O28221</accession>
<feature type="chain" id="PRO_0000107150" description="Uncharacterized protein AF_2058">
    <location>
        <begin position="1"/>
        <end position="344"/>
    </location>
</feature>
<feature type="transmembrane region" description="Helical" evidence="1">
    <location>
        <begin position="155"/>
        <end position="175"/>
    </location>
</feature>
<feature type="transmembrane region" description="Helical" evidence="1">
    <location>
        <begin position="181"/>
        <end position="201"/>
    </location>
</feature>
<feature type="transmembrane region" description="Helical" evidence="1">
    <location>
        <begin position="221"/>
        <end position="241"/>
    </location>
</feature>
<feature type="transmembrane region" description="Helical" evidence="1">
    <location>
        <begin position="254"/>
        <end position="274"/>
    </location>
</feature>
<feature type="transmembrane region" description="Helical" evidence="1">
    <location>
        <begin position="291"/>
        <end position="311"/>
    </location>
</feature>
<feature type="transmembrane region" description="Helical" evidence="1">
    <location>
        <begin position="319"/>
        <end position="339"/>
    </location>
</feature>
<gene>
    <name type="ordered locus">AF_2058</name>
</gene>
<sequence length="344" mass="37708">MPKKLVLVIDRDDDLGQKAGISSPVIGRDNIVSAAVRLGTADPEDSDVNAMFAAIKIYDELKGRGEDVEVVVVCGDRSVGVVSDSKIAEQLDRVVLNLRPSSAIVVTDGSEDEFVLPIISSRVKIDSVHRVVVRQSRTIESTYFLIRRMLNDPKIARITLAPLGMIFLVYSIFLVMQHPEWGLGGIIFFLGVYFMVKAYGWEQNIANLLETVRVSLVEGRLSFIFYVTSAILLIISIVNGFNAAVNIADAAQAISSFIFYSTWWFVLSGIFALLARAADAYAEKRRVSKYFTIIFLLIAFGLIVWASAAYVLNPEAPNALQNLAGAIVGAILIAAIGVFTLKRL</sequence>
<dbReference type="EMBL" id="AE000782">
    <property type="protein sequence ID" value="AAB89193.1"/>
    <property type="molecule type" value="Genomic_DNA"/>
</dbReference>
<dbReference type="PIR" id="A69507">
    <property type="entry name" value="A69507"/>
</dbReference>
<dbReference type="RefSeq" id="WP_010879550.1">
    <property type="nucleotide sequence ID" value="NC_000917.1"/>
</dbReference>
<dbReference type="STRING" id="224325.AF_2058"/>
<dbReference type="PaxDb" id="224325-AF_2058"/>
<dbReference type="EnsemblBacteria" id="AAB89193">
    <property type="protein sequence ID" value="AAB89193"/>
    <property type="gene ID" value="AF_2058"/>
</dbReference>
<dbReference type="KEGG" id="afu:AF_2058"/>
<dbReference type="eggNOG" id="arCOG04151">
    <property type="taxonomic scope" value="Archaea"/>
</dbReference>
<dbReference type="HOGENOM" id="CLU_048986_1_0_2"/>
<dbReference type="OrthoDB" id="31282at2157"/>
<dbReference type="PhylomeDB" id="O28221"/>
<dbReference type="Proteomes" id="UP000002199">
    <property type="component" value="Chromosome"/>
</dbReference>
<dbReference type="GO" id="GO:0005886">
    <property type="term" value="C:plasma membrane"/>
    <property type="evidence" value="ECO:0007669"/>
    <property type="project" value="UniProtKB-SubCell"/>
</dbReference>
<dbReference type="InterPro" id="IPR007254">
    <property type="entry name" value="DUF373"/>
</dbReference>
<dbReference type="PANTHER" id="PTHR38815:SF1">
    <property type="entry name" value="DUF373 FAMILY PROTEIN"/>
    <property type="match status" value="1"/>
</dbReference>
<dbReference type="PANTHER" id="PTHR38815">
    <property type="entry name" value="HYPOTHETICAL MEMBRANE PROTEIN, CONSERVED, DUF373 FAMILY"/>
    <property type="match status" value="1"/>
</dbReference>
<dbReference type="Pfam" id="PF04123">
    <property type="entry name" value="DUF373"/>
    <property type="match status" value="1"/>
</dbReference>
<evidence type="ECO:0000255" key="1"/>
<evidence type="ECO:0000305" key="2"/>
<reference key="1">
    <citation type="journal article" date="1997" name="Nature">
        <title>The complete genome sequence of the hyperthermophilic, sulphate-reducing archaeon Archaeoglobus fulgidus.</title>
        <authorList>
            <person name="Klenk H.-P."/>
            <person name="Clayton R.A."/>
            <person name="Tomb J.-F."/>
            <person name="White O."/>
            <person name="Nelson K.E."/>
            <person name="Ketchum K.A."/>
            <person name="Dodson R.J."/>
            <person name="Gwinn M.L."/>
            <person name="Hickey E.K."/>
            <person name="Peterson J.D."/>
            <person name="Richardson D.L."/>
            <person name="Kerlavage A.R."/>
            <person name="Graham D.E."/>
            <person name="Kyrpides N.C."/>
            <person name="Fleischmann R.D."/>
            <person name="Quackenbush J."/>
            <person name="Lee N.H."/>
            <person name="Sutton G.G."/>
            <person name="Gill S.R."/>
            <person name="Kirkness E.F."/>
            <person name="Dougherty B.A."/>
            <person name="McKenney K."/>
            <person name="Adams M.D."/>
            <person name="Loftus B.J."/>
            <person name="Peterson S.N."/>
            <person name="Reich C.I."/>
            <person name="McNeil L.K."/>
            <person name="Badger J.H."/>
            <person name="Glodek A."/>
            <person name="Zhou L."/>
            <person name="Overbeek R."/>
            <person name="Gocayne J.D."/>
            <person name="Weidman J.F."/>
            <person name="McDonald L.A."/>
            <person name="Utterback T.R."/>
            <person name="Cotton M.D."/>
            <person name="Spriggs T."/>
            <person name="Artiach P."/>
            <person name="Kaine B.P."/>
            <person name="Sykes S.M."/>
            <person name="Sadow P.W."/>
            <person name="D'Andrea K.P."/>
            <person name="Bowman C."/>
            <person name="Fujii C."/>
            <person name="Garland S.A."/>
            <person name="Mason T.M."/>
            <person name="Olsen G.J."/>
            <person name="Fraser C.M."/>
            <person name="Smith H.O."/>
            <person name="Woese C.R."/>
            <person name="Venter J.C."/>
        </authorList>
    </citation>
    <scope>NUCLEOTIDE SEQUENCE [LARGE SCALE GENOMIC DNA]</scope>
    <source>
        <strain>ATCC 49558 / DSM 4304 / JCM 9628 / NBRC 100126 / VC-16</strain>
    </source>
</reference>
<proteinExistence type="predicted"/>
<name>Y2058_ARCFU</name>
<organism>
    <name type="scientific">Archaeoglobus fulgidus (strain ATCC 49558 / DSM 4304 / JCM 9628 / NBRC 100126 / VC-16)</name>
    <dbReference type="NCBI Taxonomy" id="224325"/>
    <lineage>
        <taxon>Archaea</taxon>
        <taxon>Methanobacteriati</taxon>
        <taxon>Methanobacteriota</taxon>
        <taxon>Archaeoglobi</taxon>
        <taxon>Archaeoglobales</taxon>
        <taxon>Archaeoglobaceae</taxon>
        <taxon>Archaeoglobus</taxon>
    </lineage>
</organism>
<keyword id="KW-1003">Cell membrane</keyword>
<keyword id="KW-0472">Membrane</keyword>
<keyword id="KW-1185">Reference proteome</keyword>
<keyword id="KW-0812">Transmembrane</keyword>
<keyword id="KW-1133">Transmembrane helix</keyword>
<comment type="subcellular location">
    <subcellularLocation>
        <location evidence="2">Cell membrane</location>
        <topology evidence="2">Multi-pass membrane protein</topology>
    </subcellularLocation>
</comment>
<comment type="similarity">
    <text evidence="2">To M.jannaschii MJ1032.</text>
</comment>
<protein>
    <recommendedName>
        <fullName>Uncharacterized protein AF_2058</fullName>
    </recommendedName>
</protein>